<organism>
    <name type="scientific">Variovorax paradoxus (strain S110)</name>
    <dbReference type="NCBI Taxonomy" id="543728"/>
    <lineage>
        <taxon>Bacteria</taxon>
        <taxon>Pseudomonadati</taxon>
        <taxon>Pseudomonadota</taxon>
        <taxon>Betaproteobacteria</taxon>
        <taxon>Burkholderiales</taxon>
        <taxon>Comamonadaceae</taxon>
        <taxon>Variovorax</taxon>
    </lineage>
</organism>
<keyword id="KW-0031">Aminopeptidase</keyword>
<keyword id="KW-0963">Cytoplasm</keyword>
<keyword id="KW-0378">Hydrolase</keyword>
<keyword id="KW-0464">Manganese</keyword>
<keyword id="KW-0479">Metal-binding</keyword>
<keyword id="KW-0645">Protease</keyword>
<name>AMPA_VARPS</name>
<accession>C5CLU5</accession>
<evidence type="ECO:0000255" key="1">
    <source>
        <dbReference type="HAMAP-Rule" id="MF_00181"/>
    </source>
</evidence>
<evidence type="ECO:0000256" key="2">
    <source>
        <dbReference type="SAM" id="MobiDB-lite"/>
    </source>
</evidence>
<feature type="chain" id="PRO_1000203843" description="Probable cytosol aminopeptidase">
    <location>
        <begin position="1"/>
        <end position="511"/>
    </location>
</feature>
<feature type="region of interest" description="Disordered" evidence="2">
    <location>
        <begin position="485"/>
        <end position="511"/>
    </location>
</feature>
<feature type="active site" evidence="1">
    <location>
        <position position="267"/>
    </location>
</feature>
<feature type="active site" evidence="1">
    <location>
        <position position="341"/>
    </location>
</feature>
<feature type="binding site" evidence="1">
    <location>
        <position position="255"/>
    </location>
    <ligand>
        <name>Mn(2+)</name>
        <dbReference type="ChEBI" id="CHEBI:29035"/>
        <label>2</label>
    </ligand>
</feature>
<feature type="binding site" evidence="1">
    <location>
        <position position="260"/>
    </location>
    <ligand>
        <name>Mn(2+)</name>
        <dbReference type="ChEBI" id="CHEBI:29035"/>
        <label>1</label>
    </ligand>
</feature>
<feature type="binding site" evidence="1">
    <location>
        <position position="260"/>
    </location>
    <ligand>
        <name>Mn(2+)</name>
        <dbReference type="ChEBI" id="CHEBI:29035"/>
        <label>2</label>
    </ligand>
</feature>
<feature type="binding site" evidence="1">
    <location>
        <position position="278"/>
    </location>
    <ligand>
        <name>Mn(2+)</name>
        <dbReference type="ChEBI" id="CHEBI:29035"/>
        <label>2</label>
    </ligand>
</feature>
<feature type="binding site" evidence="1">
    <location>
        <position position="337"/>
    </location>
    <ligand>
        <name>Mn(2+)</name>
        <dbReference type="ChEBI" id="CHEBI:29035"/>
        <label>1</label>
    </ligand>
</feature>
<feature type="binding site" evidence="1">
    <location>
        <position position="339"/>
    </location>
    <ligand>
        <name>Mn(2+)</name>
        <dbReference type="ChEBI" id="CHEBI:29035"/>
        <label>1</label>
    </ligand>
</feature>
<feature type="binding site" evidence="1">
    <location>
        <position position="339"/>
    </location>
    <ligand>
        <name>Mn(2+)</name>
        <dbReference type="ChEBI" id="CHEBI:29035"/>
        <label>2</label>
    </ligand>
</feature>
<sequence>MDFQLKTLTVARAAAEKSDVLIVLVGSAPLTAKDPLSALIASARKAGDLPDKAGKLLALYHPDEVVASRVVLAAIGDGKPASVRSGVIAAVNAAKAYGPKRVVMAFAQEADGAAVGSAVAAAADASYVYTTTKAKTSNGENGRTIRHLTLGVADAAAVGTAFDEARATVAGIELAKEWGNRPGNYCTPTLLAEAAKELGKLPRVKCEVLGPKEVQKLGMGSFAAVAQGSAEPLRFIVLRYQGGPKDQAPVVLVGKGITFDTGGVSLKPAAEMDEMKFDMCGAASVLGTFRALGEIQPAINVVGLVPSCENMNDGRAIKPGDVVTSMSGQTIEVLNTDAEGRLILCDALTYAKRFEPAAVIDIATLTGACVVALGGVRSGLFTSDDSLAEALQAAGEQSQDRCWRLPLDDEYAEGLKSNFADVANVAGRAGGAITAAKFLQRFAGDFTWAHLDIAGTAWKSGAAKGSTGRPVGLLVSYLMERARSGAAQAVSPKKAARKEPGAAARKARSAQ</sequence>
<gene>
    <name evidence="1" type="primary">pepA</name>
    <name type="ordered locus">Vapar_2730</name>
</gene>
<proteinExistence type="inferred from homology"/>
<protein>
    <recommendedName>
        <fullName evidence="1">Probable cytosol aminopeptidase</fullName>
        <ecNumber evidence="1">3.4.11.1</ecNumber>
    </recommendedName>
    <alternativeName>
        <fullName evidence="1">Leucine aminopeptidase</fullName>
        <shortName evidence="1">LAP</shortName>
        <ecNumber evidence="1">3.4.11.10</ecNumber>
    </alternativeName>
    <alternativeName>
        <fullName evidence="1">Leucyl aminopeptidase</fullName>
    </alternativeName>
</protein>
<comment type="function">
    <text evidence="1">Presumably involved in the processing and regular turnover of intracellular proteins. Catalyzes the removal of unsubstituted N-terminal amino acids from various peptides.</text>
</comment>
<comment type="catalytic activity">
    <reaction evidence="1">
        <text>Release of an N-terminal amino acid, Xaa-|-Yaa-, in which Xaa is preferably Leu, but may be other amino acids including Pro although not Arg or Lys, and Yaa may be Pro. Amino acid amides and methyl esters are also readily hydrolyzed, but rates on arylamides are exceedingly low.</text>
        <dbReference type="EC" id="3.4.11.1"/>
    </reaction>
</comment>
<comment type="catalytic activity">
    <reaction evidence="1">
        <text>Release of an N-terminal amino acid, preferentially leucine, but not glutamic or aspartic acids.</text>
        <dbReference type="EC" id="3.4.11.10"/>
    </reaction>
</comment>
<comment type="cofactor">
    <cofactor evidence="1">
        <name>Mn(2+)</name>
        <dbReference type="ChEBI" id="CHEBI:29035"/>
    </cofactor>
    <text evidence="1">Binds 2 manganese ions per subunit.</text>
</comment>
<comment type="subcellular location">
    <subcellularLocation>
        <location evidence="1">Cytoplasm</location>
    </subcellularLocation>
</comment>
<comment type="similarity">
    <text evidence="1">Belongs to the peptidase M17 family.</text>
</comment>
<dbReference type="EC" id="3.4.11.1" evidence="1"/>
<dbReference type="EC" id="3.4.11.10" evidence="1"/>
<dbReference type="EMBL" id="CP001635">
    <property type="protein sequence ID" value="ACS19352.1"/>
    <property type="molecule type" value="Genomic_DNA"/>
</dbReference>
<dbReference type="SMR" id="C5CLU5"/>
<dbReference type="STRING" id="543728.Vapar_2730"/>
<dbReference type="MEROPS" id="M17.003"/>
<dbReference type="KEGG" id="vap:Vapar_2730"/>
<dbReference type="eggNOG" id="COG0260">
    <property type="taxonomic scope" value="Bacteria"/>
</dbReference>
<dbReference type="HOGENOM" id="CLU_013734_0_1_4"/>
<dbReference type="OrthoDB" id="9809354at2"/>
<dbReference type="GO" id="GO:0005737">
    <property type="term" value="C:cytoplasm"/>
    <property type="evidence" value="ECO:0007669"/>
    <property type="project" value="UniProtKB-SubCell"/>
</dbReference>
<dbReference type="GO" id="GO:0030145">
    <property type="term" value="F:manganese ion binding"/>
    <property type="evidence" value="ECO:0007669"/>
    <property type="project" value="UniProtKB-UniRule"/>
</dbReference>
<dbReference type="GO" id="GO:0070006">
    <property type="term" value="F:metalloaminopeptidase activity"/>
    <property type="evidence" value="ECO:0007669"/>
    <property type="project" value="InterPro"/>
</dbReference>
<dbReference type="GO" id="GO:0006508">
    <property type="term" value="P:proteolysis"/>
    <property type="evidence" value="ECO:0007669"/>
    <property type="project" value="UniProtKB-KW"/>
</dbReference>
<dbReference type="CDD" id="cd00433">
    <property type="entry name" value="Peptidase_M17"/>
    <property type="match status" value="1"/>
</dbReference>
<dbReference type="Gene3D" id="3.40.220.10">
    <property type="entry name" value="Leucine Aminopeptidase, subunit E, domain 1"/>
    <property type="match status" value="1"/>
</dbReference>
<dbReference type="Gene3D" id="3.40.630.10">
    <property type="entry name" value="Zn peptidases"/>
    <property type="match status" value="1"/>
</dbReference>
<dbReference type="HAMAP" id="MF_00181">
    <property type="entry name" value="Cytosol_peptidase_M17"/>
    <property type="match status" value="1"/>
</dbReference>
<dbReference type="InterPro" id="IPR011356">
    <property type="entry name" value="Leucine_aapep/pepB"/>
</dbReference>
<dbReference type="InterPro" id="IPR043472">
    <property type="entry name" value="Macro_dom-like"/>
</dbReference>
<dbReference type="InterPro" id="IPR000819">
    <property type="entry name" value="Peptidase_M17_C"/>
</dbReference>
<dbReference type="InterPro" id="IPR023042">
    <property type="entry name" value="Peptidase_M17_leu_NH2_pept"/>
</dbReference>
<dbReference type="InterPro" id="IPR008283">
    <property type="entry name" value="Peptidase_M17_N"/>
</dbReference>
<dbReference type="NCBIfam" id="NF002074">
    <property type="entry name" value="PRK00913.1-4"/>
    <property type="match status" value="1"/>
</dbReference>
<dbReference type="PANTHER" id="PTHR11963:SF23">
    <property type="entry name" value="CYTOSOL AMINOPEPTIDASE"/>
    <property type="match status" value="1"/>
</dbReference>
<dbReference type="PANTHER" id="PTHR11963">
    <property type="entry name" value="LEUCINE AMINOPEPTIDASE-RELATED"/>
    <property type="match status" value="1"/>
</dbReference>
<dbReference type="Pfam" id="PF00883">
    <property type="entry name" value="Peptidase_M17"/>
    <property type="match status" value="1"/>
</dbReference>
<dbReference type="Pfam" id="PF02789">
    <property type="entry name" value="Peptidase_M17_N"/>
    <property type="match status" value="1"/>
</dbReference>
<dbReference type="PRINTS" id="PR00481">
    <property type="entry name" value="LAMNOPPTDASE"/>
</dbReference>
<dbReference type="SUPFAM" id="SSF52949">
    <property type="entry name" value="Macro domain-like"/>
    <property type="match status" value="1"/>
</dbReference>
<dbReference type="SUPFAM" id="SSF53187">
    <property type="entry name" value="Zn-dependent exopeptidases"/>
    <property type="match status" value="1"/>
</dbReference>
<dbReference type="PROSITE" id="PS00631">
    <property type="entry name" value="CYTOSOL_AP"/>
    <property type="match status" value="1"/>
</dbReference>
<reference key="1">
    <citation type="journal article" date="2011" name="J. Bacteriol.">
        <title>Complete genome sequence of the metabolically versatile plant growth-promoting endophyte, Variovorax paradoxus S110.</title>
        <authorList>
            <person name="Han J.I."/>
            <person name="Choi H.K."/>
            <person name="Lee S.W."/>
            <person name="Orwin P.M."/>
            <person name="Kim J."/>
            <person name="Laroe S.L."/>
            <person name="Kim T.G."/>
            <person name="O'Neil J."/>
            <person name="Leadbetter J.R."/>
            <person name="Lee S.Y."/>
            <person name="Hur C.G."/>
            <person name="Spain J.C."/>
            <person name="Ovchinnikova G."/>
            <person name="Goodwin L."/>
            <person name="Han C."/>
        </authorList>
    </citation>
    <scope>NUCLEOTIDE SEQUENCE [LARGE SCALE GENOMIC DNA]</scope>
    <source>
        <strain>S110</strain>
    </source>
</reference>